<name>ENO_BORAP</name>
<proteinExistence type="inferred from homology"/>
<feature type="chain" id="PRO_0000267004" description="Enolase">
    <location>
        <begin position="1"/>
        <end position="433"/>
    </location>
</feature>
<feature type="active site" description="Proton donor" evidence="1">
    <location>
        <position position="206"/>
    </location>
</feature>
<feature type="active site" description="Proton acceptor" evidence="1">
    <location>
        <position position="341"/>
    </location>
</feature>
<feature type="binding site" evidence="1">
    <location>
        <position position="164"/>
    </location>
    <ligand>
        <name>(2R)-2-phosphoglycerate</name>
        <dbReference type="ChEBI" id="CHEBI:58289"/>
    </ligand>
</feature>
<feature type="binding site" evidence="1">
    <location>
        <position position="243"/>
    </location>
    <ligand>
        <name>Mg(2+)</name>
        <dbReference type="ChEBI" id="CHEBI:18420"/>
    </ligand>
</feature>
<feature type="binding site" evidence="1">
    <location>
        <position position="289"/>
    </location>
    <ligand>
        <name>Mg(2+)</name>
        <dbReference type="ChEBI" id="CHEBI:18420"/>
    </ligand>
</feature>
<feature type="binding site" evidence="1">
    <location>
        <position position="316"/>
    </location>
    <ligand>
        <name>Mg(2+)</name>
        <dbReference type="ChEBI" id="CHEBI:18420"/>
    </ligand>
</feature>
<feature type="binding site" evidence="1">
    <location>
        <position position="341"/>
    </location>
    <ligand>
        <name>(2R)-2-phosphoglycerate</name>
        <dbReference type="ChEBI" id="CHEBI:58289"/>
    </ligand>
</feature>
<feature type="binding site" evidence="1">
    <location>
        <position position="370"/>
    </location>
    <ligand>
        <name>(2R)-2-phosphoglycerate</name>
        <dbReference type="ChEBI" id="CHEBI:58289"/>
    </ligand>
</feature>
<feature type="binding site" evidence="1">
    <location>
        <position position="371"/>
    </location>
    <ligand>
        <name>(2R)-2-phosphoglycerate</name>
        <dbReference type="ChEBI" id="CHEBI:58289"/>
    </ligand>
</feature>
<feature type="binding site" evidence="1">
    <location>
        <position position="392"/>
    </location>
    <ligand>
        <name>(2R)-2-phosphoglycerate</name>
        <dbReference type="ChEBI" id="CHEBI:58289"/>
    </ligand>
</feature>
<comment type="function">
    <text evidence="1">Catalyzes the reversible conversion of 2-phosphoglycerate (2-PG) into phosphoenolpyruvate (PEP). It is essential for the degradation of carbohydrates via glycolysis.</text>
</comment>
<comment type="catalytic activity">
    <reaction evidence="1">
        <text>(2R)-2-phosphoglycerate = phosphoenolpyruvate + H2O</text>
        <dbReference type="Rhea" id="RHEA:10164"/>
        <dbReference type="ChEBI" id="CHEBI:15377"/>
        <dbReference type="ChEBI" id="CHEBI:58289"/>
        <dbReference type="ChEBI" id="CHEBI:58702"/>
        <dbReference type="EC" id="4.2.1.11"/>
    </reaction>
</comment>
<comment type="cofactor">
    <cofactor evidence="1">
        <name>Mg(2+)</name>
        <dbReference type="ChEBI" id="CHEBI:18420"/>
    </cofactor>
    <text evidence="1">Binds a second Mg(2+) ion via substrate during catalysis.</text>
</comment>
<comment type="pathway">
    <text evidence="1">Carbohydrate degradation; glycolysis; pyruvate from D-glyceraldehyde 3-phosphate: step 4/5.</text>
</comment>
<comment type="subcellular location">
    <subcellularLocation>
        <location evidence="1">Cytoplasm</location>
    </subcellularLocation>
    <subcellularLocation>
        <location evidence="1">Secreted</location>
    </subcellularLocation>
    <subcellularLocation>
        <location evidence="1">Cell surface</location>
    </subcellularLocation>
    <text evidence="1">Fractions of enolase are present in both the cytoplasm and on the cell surface.</text>
</comment>
<comment type="similarity">
    <text evidence="1">Belongs to the enolase family.</text>
</comment>
<gene>
    <name evidence="1" type="primary">eno</name>
    <name type="ordered locus">BAPKO_0346</name>
    <name type="ordered locus">BafPKo_0337</name>
</gene>
<evidence type="ECO:0000255" key="1">
    <source>
        <dbReference type="HAMAP-Rule" id="MF_00318"/>
    </source>
</evidence>
<dbReference type="EC" id="4.2.1.11" evidence="1"/>
<dbReference type="EMBL" id="CP000395">
    <property type="protein sequence ID" value="ABH01603.1"/>
    <property type="molecule type" value="Genomic_DNA"/>
</dbReference>
<dbReference type="EMBL" id="CP002933">
    <property type="protein sequence ID" value="AEL69563.1"/>
    <property type="molecule type" value="Genomic_DNA"/>
</dbReference>
<dbReference type="RefSeq" id="WP_011600962.1">
    <property type="nucleotide sequence ID" value="NZ_CP160066.1"/>
</dbReference>
<dbReference type="SMR" id="Q0SNH5"/>
<dbReference type="STRING" id="29518.BLA32_02625"/>
<dbReference type="GeneID" id="76831870"/>
<dbReference type="KEGG" id="baf:BAPKO_0346"/>
<dbReference type="KEGG" id="bafz:BafPKo_0337"/>
<dbReference type="PATRIC" id="fig|390236.22.peg.330"/>
<dbReference type="eggNOG" id="COG0148">
    <property type="taxonomic scope" value="Bacteria"/>
</dbReference>
<dbReference type="HOGENOM" id="CLU_031223_2_1_12"/>
<dbReference type="OrthoDB" id="9804716at2"/>
<dbReference type="UniPathway" id="UPA00109">
    <property type="reaction ID" value="UER00187"/>
</dbReference>
<dbReference type="Proteomes" id="UP000005216">
    <property type="component" value="Chromosome"/>
</dbReference>
<dbReference type="GO" id="GO:0009986">
    <property type="term" value="C:cell surface"/>
    <property type="evidence" value="ECO:0007669"/>
    <property type="project" value="UniProtKB-SubCell"/>
</dbReference>
<dbReference type="GO" id="GO:0005576">
    <property type="term" value="C:extracellular region"/>
    <property type="evidence" value="ECO:0007669"/>
    <property type="project" value="UniProtKB-SubCell"/>
</dbReference>
<dbReference type="GO" id="GO:0000015">
    <property type="term" value="C:phosphopyruvate hydratase complex"/>
    <property type="evidence" value="ECO:0007669"/>
    <property type="project" value="InterPro"/>
</dbReference>
<dbReference type="GO" id="GO:0000287">
    <property type="term" value="F:magnesium ion binding"/>
    <property type="evidence" value="ECO:0007669"/>
    <property type="project" value="UniProtKB-UniRule"/>
</dbReference>
<dbReference type="GO" id="GO:0004634">
    <property type="term" value="F:phosphopyruvate hydratase activity"/>
    <property type="evidence" value="ECO:0007669"/>
    <property type="project" value="UniProtKB-UniRule"/>
</dbReference>
<dbReference type="GO" id="GO:0006096">
    <property type="term" value="P:glycolytic process"/>
    <property type="evidence" value="ECO:0007669"/>
    <property type="project" value="UniProtKB-UniRule"/>
</dbReference>
<dbReference type="CDD" id="cd03313">
    <property type="entry name" value="enolase"/>
    <property type="match status" value="1"/>
</dbReference>
<dbReference type="FunFam" id="3.20.20.120:FF:000001">
    <property type="entry name" value="Enolase"/>
    <property type="match status" value="1"/>
</dbReference>
<dbReference type="FunFam" id="3.30.390.10:FF:000001">
    <property type="entry name" value="Enolase"/>
    <property type="match status" value="1"/>
</dbReference>
<dbReference type="Gene3D" id="3.20.20.120">
    <property type="entry name" value="Enolase-like C-terminal domain"/>
    <property type="match status" value="1"/>
</dbReference>
<dbReference type="Gene3D" id="3.30.390.10">
    <property type="entry name" value="Enolase-like, N-terminal domain"/>
    <property type="match status" value="1"/>
</dbReference>
<dbReference type="HAMAP" id="MF_00318">
    <property type="entry name" value="Enolase"/>
    <property type="match status" value="1"/>
</dbReference>
<dbReference type="InterPro" id="IPR000941">
    <property type="entry name" value="Enolase"/>
</dbReference>
<dbReference type="InterPro" id="IPR036849">
    <property type="entry name" value="Enolase-like_C_sf"/>
</dbReference>
<dbReference type="InterPro" id="IPR029017">
    <property type="entry name" value="Enolase-like_N"/>
</dbReference>
<dbReference type="InterPro" id="IPR020810">
    <property type="entry name" value="Enolase_C"/>
</dbReference>
<dbReference type="InterPro" id="IPR020809">
    <property type="entry name" value="Enolase_CS"/>
</dbReference>
<dbReference type="InterPro" id="IPR020811">
    <property type="entry name" value="Enolase_N"/>
</dbReference>
<dbReference type="NCBIfam" id="TIGR01060">
    <property type="entry name" value="eno"/>
    <property type="match status" value="1"/>
</dbReference>
<dbReference type="PANTHER" id="PTHR11902">
    <property type="entry name" value="ENOLASE"/>
    <property type="match status" value="1"/>
</dbReference>
<dbReference type="PANTHER" id="PTHR11902:SF1">
    <property type="entry name" value="ENOLASE"/>
    <property type="match status" value="1"/>
</dbReference>
<dbReference type="Pfam" id="PF00113">
    <property type="entry name" value="Enolase_C"/>
    <property type="match status" value="1"/>
</dbReference>
<dbReference type="Pfam" id="PF03952">
    <property type="entry name" value="Enolase_N"/>
    <property type="match status" value="1"/>
</dbReference>
<dbReference type="PIRSF" id="PIRSF001400">
    <property type="entry name" value="Enolase"/>
    <property type="match status" value="1"/>
</dbReference>
<dbReference type="PRINTS" id="PR00148">
    <property type="entry name" value="ENOLASE"/>
</dbReference>
<dbReference type="SFLD" id="SFLDS00001">
    <property type="entry name" value="Enolase"/>
    <property type="match status" value="1"/>
</dbReference>
<dbReference type="SFLD" id="SFLDF00002">
    <property type="entry name" value="enolase"/>
    <property type="match status" value="1"/>
</dbReference>
<dbReference type="SMART" id="SM01192">
    <property type="entry name" value="Enolase_C"/>
    <property type="match status" value="1"/>
</dbReference>
<dbReference type="SMART" id="SM01193">
    <property type="entry name" value="Enolase_N"/>
    <property type="match status" value="1"/>
</dbReference>
<dbReference type="SUPFAM" id="SSF51604">
    <property type="entry name" value="Enolase C-terminal domain-like"/>
    <property type="match status" value="1"/>
</dbReference>
<dbReference type="SUPFAM" id="SSF54826">
    <property type="entry name" value="Enolase N-terminal domain-like"/>
    <property type="match status" value="1"/>
</dbReference>
<dbReference type="PROSITE" id="PS00164">
    <property type="entry name" value="ENOLASE"/>
    <property type="match status" value="1"/>
</dbReference>
<protein>
    <recommendedName>
        <fullName evidence="1">Enolase</fullName>
        <ecNumber evidence="1">4.2.1.11</ecNumber>
    </recommendedName>
    <alternativeName>
        <fullName evidence="1">2-phospho-D-glycerate hydro-lyase</fullName>
    </alternativeName>
    <alternativeName>
        <fullName evidence="1">2-phosphoglycerate dehydratase</fullName>
    </alternativeName>
</protein>
<reference key="1">
    <citation type="journal article" date="2006" name="BMC Genomics">
        <title>Comparative genome analysis: selection pressure on the Borrelia vls cassettes is essential for infectivity.</title>
        <authorList>
            <person name="Gloeckner G."/>
            <person name="Schulte-Spechtel U."/>
            <person name="Schilhabel M."/>
            <person name="Felder M."/>
            <person name="Suehnel J."/>
            <person name="Wilske B."/>
            <person name="Platzer M."/>
        </authorList>
    </citation>
    <scope>NUCLEOTIDE SEQUENCE [LARGE SCALE GENOMIC DNA]</scope>
    <source>
        <strain>PKo</strain>
    </source>
</reference>
<reference key="2">
    <citation type="journal article" date="2011" name="J. Bacteriol.">
        <title>Whole-genome sequences of two Borrelia afzelii and two Borrelia garinii Lyme disease agent isolates.</title>
        <authorList>
            <person name="Casjens S.R."/>
            <person name="Mongodin E.F."/>
            <person name="Qiu W.G."/>
            <person name="Dunn J.J."/>
            <person name="Luft B.J."/>
            <person name="Fraser-Liggett C.M."/>
            <person name="Schutzer S.E."/>
        </authorList>
    </citation>
    <scope>NUCLEOTIDE SEQUENCE [LARGE SCALE GENOMIC DNA]</scope>
    <source>
        <strain>PKo</strain>
    </source>
</reference>
<keyword id="KW-0963">Cytoplasm</keyword>
<keyword id="KW-0324">Glycolysis</keyword>
<keyword id="KW-0456">Lyase</keyword>
<keyword id="KW-0460">Magnesium</keyword>
<keyword id="KW-0479">Metal-binding</keyword>
<keyword id="KW-0964">Secreted</keyword>
<organism>
    <name type="scientific">Borreliella afzelii (strain PKo)</name>
    <name type="common">Borrelia afzelii</name>
    <dbReference type="NCBI Taxonomy" id="390236"/>
    <lineage>
        <taxon>Bacteria</taxon>
        <taxon>Pseudomonadati</taxon>
        <taxon>Spirochaetota</taxon>
        <taxon>Spirochaetia</taxon>
        <taxon>Spirochaetales</taxon>
        <taxon>Borreliaceae</taxon>
        <taxon>Borreliella</taxon>
    </lineage>
</organism>
<accession>Q0SNH5</accession>
<accession>G0IRQ3</accession>
<sequence>MGFHIYEIKARQIIDSRGNPTVEADVILEDGTCGRSAVPSGASTGINEAVELRDGDKSVYMGKGVLKAIENIKNIIAPELEGMSALNQVAIDRKMLELDGTPTKEKLGANAILAVSMATAKAAAKYLGLKVYQYLGAYKANILPTPMCNIINGGAHSDNSVDFQEFMIMPIGAKTFSEAIRMSVEVFHTLKGILHGKGYATSVGDEGGFAPNLKSNEEACEMIIEAIKKAGYEPGKDIAIALDPATSELYDPKTKKYVLKWSTKEELTSEQMVEYWSKWVEKYPIISIEDGMAEEDWDGWKKLTDKIGHKIQLVGDDLFVTNTSFLKKGIEMGVANSILIKVNQIGTLTETFEAVEMAKKAGYTAIVSHRSGETEDTTIADLVVALGTGQIKTGSLSRTDRIAKYNQLIRIEEELETTAEYHGKNVFYSIKQK</sequence>